<keyword id="KW-0131">Cell cycle</keyword>
<keyword id="KW-0132">Cell division</keyword>
<keyword id="KW-0195">Cyclin</keyword>
<keyword id="KW-1185">Reference proteome</keyword>
<comment type="similarity">
    <text evidence="2">Belongs to the cyclin family. Cyclin D subfamily.</text>
</comment>
<feature type="chain" id="PRO_0000287040" description="Putative cyclin-D7-1">
    <location>
        <begin position="1"/>
        <end position="320"/>
    </location>
</feature>
<feature type="region of interest" description="Disordered" evidence="1">
    <location>
        <begin position="1"/>
        <end position="46"/>
    </location>
</feature>
<feature type="compositionally biased region" description="Pro residues" evidence="1">
    <location>
        <begin position="24"/>
        <end position="34"/>
    </location>
</feature>
<feature type="compositionally biased region" description="Low complexity" evidence="1">
    <location>
        <begin position="35"/>
        <end position="44"/>
    </location>
</feature>
<organism>
    <name type="scientific">Oryza sativa subsp. japonica</name>
    <name type="common">Rice</name>
    <dbReference type="NCBI Taxonomy" id="39947"/>
    <lineage>
        <taxon>Eukaryota</taxon>
        <taxon>Viridiplantae</taxon>
        <taxon>Streptophyta</taxon>
        <taxon>Embryophyta</taxon>
        <taxon>Tracheophyta</taxon>
        <taxon>Spermatophyta</taxon>
        <taxon>Magnoliopsida</taxon>
        <taxon>Liliopsida</taxon>
        <taxon>Poales</taxon>
        <taxon>Poaceae</taxon>
        <taxon>BOP clade</taxon>
        <taxon>Oryzoideae</taxon>
        <taxon>Oryzeae</taxon>
        <taxon>Oryzinae</taxon>
        <taxon>Oryza</taxon>
        <taxon>Oryza sativa</taxon>
    </lineage>
</organism>
<proteinExistence type="inferred from homology"/>
<reference key="1">
    <citation type="journal article" date="2005" name="BMC Biol.">
        <title>The sequence of rice chromosomes 11 and 12, rich in disease resistance genes and recent gene duplications.</title>
        <authorList>
            <consortium name="The rice chromosomes 11 and 12 sequencing consortia"/>
        </authorList>
    </citation>
    <scope>NUCLEOTIDE SEQUENCE [LARGE SCALE GENOMIC DNA]</scope>
    <source>
        <strain>cv. Nipponbare</strain>
    </source>
</reference>
<reference key="2">
    <citation type="journal article" date="2005" name="Nature">
        <title>The map-based sequence of the rice genome.</title>
        <authorList>
            <consortium name="International rice genome sequencing project (IRGSP)"/>
        </authorList>
    </citation>
    <scope>NUCLEOTIDE SEQUENCE [LARGE SCALE GENOMIC DNA]</scope>
    <source>
        <strain>cv. Nipponbare</strain>
    </source>
</reference>
<reference key="3">
    <citation type="journal article" date="2013" name="Rice">
        <title>Improvement of the Oryza sativa Nipponbare reference genome using next generation sequence and optical map data.</title>
        <authorList>
            <person name="Kawahara Y."/>
            <person name="de la Bastide M."/>
            <person name="Hamilton J.P."/>
            <person name="Kanamori H."/>
            <person name="McCombie W.R."/>
            <person name="Ouyang S."/>
            <person name="Schwartz D.C."/>
            <person name="Tanaka T."/>
            <person name="Wu J."/>
            <person name="Zhou S."/>
            <person name="Childs K.L."/>
            <person name="Davidson R.M."/>
            <person name="Lin H."/>
            <person name="Quesada-Ocampo L."/>
            <person name="Vaillancourt B."/>
            <person name="Sakai H."/>
            <person name="Lee S.S."/>
            <person name="Kim J."/>
            <person name="Numa H."/>
            <person name="Itoh T."/>
            <person name="Buell C.R."/>
            <person name="Matsumoto T."/>
        </authorList>
    </citation>
    <scope>GENOME REANNOTATION</scope>
    <source>
        <strain>cv. Nipponbare</strain>
    </source>
</reference>
<reference key="4">
    <citation type="journal article" date="2005" name="PLoS Biol.">
        <title>The genomes of Oryza sativa: a history of duplications.</title>
        <authorList>
            <person name="Yu J."/>
            <person name="Wang J."/>
            <person name="Lin W."/>
            <person name="Li S."/>
            <person name="Li H."/>
            <person name="Zhou J."/>
            <person name="Ni P."/>
            <person name="Dong W."/>
            <person name="Hu S."/>
            <person name="Zeng C."/>
            <person name="Zhang J."/>
            <person name="Zhang Y."/>
            <person name="Li R."/>
            <person name="Xu Z."/>
            <person name="Li S."/>
            <person name="Li X."/>
            <person name="Zheng H."/>
            <person name="Cong L."/>
            <person name="Lin L."/>
            <person name="Yin J."/>
            <person name="Geng J."/>
            <person name="Li G."/>
            <person name="Shi J."/>
            <person name="Liu J."/>
            <person name="Lv H."/>
            <person name="Li J."/>
            <person name="Wang J."/>
            <person name="Deng Y."/>
            <person name="Ran L."/>
            <person name="Shi X."/>
            <person name="Wang X."/>
            <person name="Wu Q."/>
            <person name="Li C."/>
            <person name="Ren X."/>
            <person name="Wang J."/>
            <person name="Wang X."/>
            <person name="Li D."/>
            <person name="Liu D."/>
            <person name="Zhang X."/>
            <person name="Ji Z."/>
            <person name="Zhao W."/>
            <person name="Sun Y."/>
            <person name="Zhang Z."/>
            <person name="Bao J."/>
            <person name="Han Y."/>
            <person name="Dong L."/>
            <person name="Ji J."/>
            <person name="Chen P."/>
            <person name="Wu S."/>
            <person name="Liu J."/>
            <person name="Xiao Y."/>
            <person name="Bu D."/>
            <person name="Tan J."/>
            <person name="Yang L."/>
            <person name="Ye C."/>
            <person name="Zhang J."/>
            <person name="Xu J."/>
            <person name="Zhou Y."/>
            <person name="Yu Y."/>
            <person name="Zhang B."/>
            <person name="Zhuang S."/>
            <person name="Wei H."/>
            <person name="Liu B."/>
            <person name="Lei M."/>
            <person name="Yu H."/>
            <person name="Li Y."/>
            <person name="Xu H."/>
            <person name="Wei S."/>
            <person name="He X."/>
            <person name="Fang L."/>
            <person name="Zhang Z."/>
            <person name="Zhang Y."/>
            <person name="Huang X."/>
            <person name="Su Z."/>
            <person name="Tong W."/>
            <person name="Li J."/>
            <person name="Tong Z."/>
            <person name="Li S."/>
            <person name="Ye J."/>
            <person name="Wang L."/>
            <person name="Fang L."/>
            <person name="Lei T."/>
            <person name="Chen C.-S."/>
            <person name="Chen H.-C."/>
            <person name="Xu Z."/>
            <person name="Li H."/>
            <person name="Huang H."/>
            <person name="Zhang F."/>
            <person name="Xu H."/>
            <person name="Li N."/>
            <person name="Zhao C."/>
            <person name="Li S."/>
            <person name="Dong L."/>
            <person name="Huang Y."/>
            <person name="Li L."/>
            <person name="Xi Y."/>
            <person name="Qi Q."/>
            <person name="Li W."/>
            <person name="Zhang B."/>
            <person name="Hu W."/>
            <person name="Zhang Y."/>
            <person name="Tian X."/>
            <person name="Jiao Y."/>
            <person name="Liang X."/>
            <person name="Jin J."/>
            <person name="Gao L."/>
            <person name="Zheng W."/>
            <person name="Hao B."/>
            <person name="Liu S.-M."/>
            <person name="Wang W."/>
            <person name="Yuan L."/>
            <person name="Cao M."/>
            <person name="McDermott J."/>
            <person name="Samudrala R."/>
            <person name="Wang J."/>
            <person name="Wong G.K.-S."/>
            <person name="Yang H."/>
        </authorList>
    </citation>
    <scope>NUCLEOTIDE SEQUENCE [LARGE SCALE GENOMIC DNA]</scope>
    <source>
        <strain>cv. Nipponbare</strain>
    </source>
</reference>
<reference key="5">
    <citation type="journal article" date="2006" name="Mol. Genet. Genomics">
        <title>Genome-wide analysis of cyclin family in rice (Oryza sativa L.).</title>
        <authorList>
            <person name="La H."/>
            <person name="Li J."/>
            <person name="Ji Z."/>
            <person name="Cheng Y."/>
            <person name="Li X."/>
            <person name="Jiang S."/>
            <person name="Venkatesh P.N."/>
            <person name="Ramachandran S."/>
        </authorList>
    </citation>
    <scope>GENE FAMILY</scope>
    <scope>NOMENCLATURE</scope>
</reference>
<gene>
    <name type="primary">CYCD7-1</name>
    <name type="ordered locus">Os11g0706801</name>
    <name type="ordered locus">LOC_Os11g47950</name>
    <name type="ORF">OsJ_033537</name>
</gene>
<protein>
    <recommendedName>
        <fullName>Putative cyclin-D7-1</fullName>
    </recommendedName>
    <alternativeName>
        <fullName>G1/S-specific cyclin-D7-1</fullName>
        <shortName>CycD7;1</shortName>
    </alternativeName>
</protein>
<name>CCD71_ORYSJ</name>
<sequence length="320" mass="35983">MDDDDDTSFNNSLDLYCDEDPFDSTPPPPPPPPEQQQQAGTTTPDDIDDEVMEYYKAKQRCYALQIRDYCCYLQCHHLLLQQQQHGVAAARLKAAMGRLGLEAATAFNAANYLDRFLSINCHLKWEEWMVEVVSVGCLSLACKLDEVTIPSLHDLQMEEAMGHSFRASTIRDMELTLLKALRWRLACVTPFSFLPVTTTTTTTRALLLRSLLDPSFLRFDASLLAASALTLSSTTPQHPNHLLLNRLIHPFSQTDHEVKECFNMMKALHLDMSKNPGRSSDHPCWSPISVVIPFHTDGTVKRSAISRCLFGSGRLKARSI</sequence>
<dbReference type="EMBL" id="AC133008">
    <property type="protein sequence ID" value="AAX95412.1"/>
    <property type="molecule type" value="Genomic_DNA"/>
</dbReference>
<dbReference type="EMBL" id="AC137064">
    <property type="protein sequence ID" value="AAX95283.1"/>
    <property type="molecule type" value="Genomic_DNA"/>
</dbReference>
<dbReference type="EMBL" id="DP000010">
    <property type="protein sequence ID" value="ABA95520.1"/>
    <property type="molecule type" value="Genomic_DNA"/>
</dbReference>
<dbReference type="EMBL" id="AP014967">
    <property type="protein sequence ID" value="BAT15414.1"/>
    <property type="molecule type" value="Genomic_DNA"/>
</dbReference>
<dbReference type="EMBL" id="CM000148">
    <property type="protein sequence ID" value="EAZ19328.1"/>
    <property type="molecule type" value="Genomic_DNA"/>
</dbReference>
<dbReference type="SMR" id="Q53MB7"/>
<dbReference type="FunCoup" id="Q53MB7">
    <property type="interactions" value="224"/>
</dbReference>
<dbReference type="STRING" id="39947.Q53MB7"/>
<dbReference type="PaxDb" id="39947-Q53MB7"/>
<dbReference type="EnsemblPlants" id="Os11t0706801-00">
    <property type="protein sequence ID" value="Os11t0706801-00"/>
    <property type="gene ID" value="Os11g0706801"/>
</dbReference>
<dbReference type="Gramene" id="Os11t0706801-00">
    <property type="protein sequence ID" value="Os11t0706801-00"/>
    <property type="gene ID" value="Os11g0706801"/>
</dbReference>
<dbReference type="eggNOG" id="KOG0656">
    <property type="taxonomic scope" value="Eukaryota"/>
</dbReference>
<dbReference type="HOGENOM" id="CLU_052253_0_0_1"/>
<dbReference type="InParanoid" id="Q53MB7"/>
<dbReference type="OMA" id="AFESTDH"/>
<dbReference type="Proteomes" id="UP000000763">
    <property type="component" value="Chromosome 11"/>
</dbReference>
<dbReference type="Proteomes" id="UP000007752">
    <property type="component" value="Chromosome 11"/>
</dbReference>
<dbReference type="Proteomes" id="UP000059680">
    <property type="component" value="Chromosome 11"/>
</dbReference>
<dbReference type="GO" id="GO:0000307">
    <property type="term" value="C:cyclin-dependent protein kinase holoenzyme complex"/>
    <property type="evidence" value="ECO:0000318"/>
    <property type="project" value="GO_Central"/>
</dbReference>
<dbReference type="GO" id="GO:0005737">
    <property type="term" value="C:cytoplasm"/>
    <property type="evidence" value="ECO:0000318"/>
    <property type="project" value="GO_Central"/>
</dbReference>
<dbReference type="GO" id="GO:0005634">
    <property type="term" value="C:nucleus"/>
    <property type="evidence" value="ECO:0000318"/>
    <property type="project" value="GO_Central"/>
</dbReference>
<dbReference type="GO" id="GO:0016538">
    <property type="term" value="F:cyclin-dependent protein serine/threonine kinase regulator activity"/>
    <property type="evidence" value="ECO:0000318"/>
    <property type="project" value="GO_Central"/>
</dbReference>
<dbReference type="GO" id="GO:0051301">
    <property type="term" value="P:cell division"/>
    <property type="evidence" value="ECO:0007669"/>
    <property type="project" value="UniProtKB-KW"/>
</dbReference>
<dbReference type="GO" id="GO:0000082">
    <property type="term" value="P:G1/S transition of mitotic cell cycle"/>
    <property type="evidence" value="ECO:0000318"/>
    <property type="project" value="GO_Central"/>
</dbReference>
<dbReference type="FunFam" id="1.10.472.10:FF:000259">
    <property type="entry name" value="Putative cyclin-D7-1"/>
    <property type="match status" value="1"/>
</dbReference>
<dbReference type="Gene3D" id="1.10.472.10">
    <property type="entry name" value="Cyclin-like"/>
    <property type="match status" value="2"/>
</dbReference>
<dbReference type="InterPro" id="IPR039361">
    <property type="entry name" value="Cyclin"/>
</dbReference>
<dbReference type="InterPro" id="IPR013763">
    <property type="entry name" value="Cyclin-like_dom"/>
</dbReference>
<dbReference type="InterPro" id="IPR036915">
    <property type="entry name" value="Cyclin-like_sf"/>
</dbReference>
<dbReference type="InterPro" id="IPR004367">
    <property type="entry name" value="Cyclin_C-dom"/>
</dbReference>
<dbReference type="InterPro" id="IPR006671">
    <property type="entry name" value="Cyclin_N"/>
</dbReference>
<dbReference type="PANTHER" id="PTHR10177">
    <property type="entry name" value="CYCLINS"/>
    <property type="match status" value="1"/>
</dbReference>
<dbReference type="Pfam" id="PF02984">
    <property type="entry name" value="Cyclin_C"/>
    <property type="match status" value="1"/>
</dbReference>
<dbReference type="Pfam" id="PF00134">
    <property type="entry name" value="Cyclin_N"/>
    <property type="match status" value="1"/>
</dbReference>
<dbReference type="SMART" id="SM00385">
    <property type="entry name" value="CYCLIN"/>
    <property type="match status" value="1"/>
</dbReference>
<dbReference type="SMART" id="SM01332">
    <property type="entry name" value="Cyclin_C"/>
    <property type="match status" value="1"/>
</dbReference>
<dbReference type="SUPFAM" id="SSF47954">
    <property type="entry name" value="Cyclin-like"/>
    <property type="match status" value="2"/>
</dbReference>
<accession>Q53MB7</accession>
<accession>A0A0P0Y635</accession>
<accession>Q0IQU8</accession>
<evidence type="ECO:0000256" key="1">
    <source>
        <dbReference type="SAM" id="MobiDB-lite"/>
    </source>
</evidence>
<evidence type="ECO:0000305" key="2"/>